<organism>
    <name type="scientific">Xenopus tropicalis</name>
    <name type="common">Western clawed frog</name>
    <name type="synonym">Silurana tropicalis</name>
    <dbReference type="NCBI Taxonomy" id="8364"/>
    <lineage>
        <taxon>Eukaryota</taxon>
        <taxon>Metazoa</taxon>
        <taxon>Chordata</taxon>
        <taxon>Craniata</taxon>
        <taxon>Vertebrata</taxon>
        <taxon>Euteleostomi</taxon>
        <taxon>Amphibia</taxon>
        <taxon>Batrachia</taxon>
        <taxon>Anura</taxon>
        <taxon>Pipoidea</taxon>
        <taxon>Pipidae</taxon>
        <taxon>Xenopodinae</taxon>
        <taxon>Xenopus</taxon>
        <taxon>Silurana</taxon>
    </lineage>
</organism>
<name>NTM1A_XENTR</name>
<gene>
    <name type="primary">ntmt1</name>
    <name type="synonym">mettl11a</name>
</gene>
<reference key="1">
    <citation type="submission" date="2008-03" db="EMBL/GenBank/DDBJ databases">
        <authorList>
            <consortium name="NIH - Xenopus Gene Collection (XGC) project"/>
        </authorList>
    </citation>
    <scope>NUCLEOTIDE SEQUENCE [LARGE SCALE MRNA]</scope>
    <source>
        <tissue>Testis</tissue>
    </source>
</reference>
<protein>
    <recommendedName>
        <fullName>N-terminal Xaa-Pro-Lys N-methyltransferase 1</fullName>
        <ecNumber evidence="1">2.1.1.244</ecNumber>
    </recommendedName>
    <alternativeName>
        <fullName>Alpha N-terminal protein methyltransferase 1A</fullName>
    </alternativeName>
    <alternativeName>
        <fullName>Methyltransferase-like protein 11A</fullName>
    </alternativeName>
    <alternativeName>
        <fullName>X-Pro-Lys N-terminal protein methyltransferase 1A</fullName>
        <shortName>NTM1A</shortName>
    </alternativeName>
</protein>
<evidence type="ECO:0000250" key="1">
    <source>
        <dbReference type="UniProtKB" id="Q9BV86"/>
    </source>
</evidence>
<evidence type="ECO:0000305" key="2"/>
<accession>B1H2P7</accession>
<feature type="chain" id="PRO_0000399778" description="N-terminal Xaa-Pro-Lys N-methyltransferase 1">
    <location>
        <begin position="1"/>
        <end position="224"/>
    </location>
</feature>
<feature type="binding site" evidence="1">
    <location>
        <position position="70"/>
    </location>
    <ligand>
        <name>S-adenosyl-L-methionine</name>
        <dbReference type="ChEBI" id="CHEBI:59789"/>
    </ligand>
</feature>
<feature type="binding site" evidence="1">
    <location>
        <position position="75"/>
    </location>
    <ligand>
        <name>S-adenosyl-L-methionine</name>
        <dbReference type="ChEBI" id="CHEBI:59789"/>
    </ligand>
</feature>
<feature type="binding site" evidence="1">
    <location>
        <begin position="92"/>
        <end position="94"/>
    </location>
    <ligand>
        <name>S-adenosyl-L-methionine</name>
        <dbReference type="ChEBI" id="CHEBI:59789"/>
    </ligand>
</feature>
<feature type="binding site" evidence="1">
    <location>
        <begin position="120"/>
        <end position="121"/>
    </location>
    <ligand>
        <name>S-adenosyl-L-methionine</name>
        <dbReference type="ChEBI" id="CHEBI:59789"/>
    </ligand>
</feature>
<feature type="binding site" evidence="1">
    <location>
        <position position="136"/>
    </location>
    <ligand>
        <name>S-adenosyl-L-methionine</name>
        <dbReference type="ChEBI" id="CHEBI:59789"/>
    </ligand>
</feature>
<dbReference type="EC" id="2.1.1.244" evidence="1"/>
<dbReference type="EMBL" id="BC161081">
    <property type="protein sequence ID" value="AAI61081.1"/>
    <property type="molecule type" value="mRNA"/>
</dbReference>
<dbReference type="RefSeq" id="NP_001120381.1">
    <property type="nucleotide sequence ID" value="NM_001126909.1"/>
</dbReference>
<dbReference type="RefSeq" id="XP_012823473.1">
    <property type="nucleotide sequence ID" value="XM_012968019.3"/>
</dbReference>
<dbReference type="SMR" id="B1H2P7"/>
<dbReference type="FunCoup" id="B1H2P7">
    <property type="interactions" value="2787"/>
</dbReference>
<dbReference type="STRING" id="8364.ENSXETP00000036107"/>
<dbReference type="PaxDb" id="8364-ENSXETP00000030922"/>
<dbReference type="GeneID" id="100145456"/>
<dbReference type="KEGG" id="xtr:100145456"/>
<dbReference type="AGR" id="Xenbase:XB-GENE-994935"/>
<dbReference type="CTD" id="28989"/>
<dbReference type="Xenbase" id="XB-GENE-994935">
    <property type="gene designation" value="ntmt1"/>
</dbReference>
<dbReference type="eggNOG" id="KOG3178">
    <property type="taxonomic scope" value="Eukaryota"/>
</dbReference>
<dbReference type="HOGENOM" id="CLU_055356_3_1_1"/>
<dbReference type="InParanoid" id="B1H2P7"/>
<dbReference type="OMA" id="PVRMYCL"/>
<dbReference type="OrthoDB" id="1298661at2759"/>
<dbReference type="PhylomeDB" id="B1H2P7"/>
<dbReference type="TreeFam" id="TF314174"/>
<dbReference type="Proteomes" id="UP000008143">
    <property type="component" value="Chromosome 8"/>
</dbReference>
<dbReference type="Bgee" id="ENSXETG00000014162">
    <property type="expression patterns" value="Expressed in skeletal muscle tissue and 12 other cell types or tissues"/>
</dbReference>
<dbReference type="GO" id="GO:0005634">
    <property type="term" value="C:nucleus"/>
    <property type="evidence" value="ECO:0000250"/>
    <property type="project" value="UniProtKB"/>
</dbReference>
<dbReference type="GO" id="GO:0042054">
    <property type="term" value="F:histone methyltransferase activity"/>
    <property type="evidence" value="ECO:0000250"/>
    <property type="project" value="UniProtKB"/>
</dbReference>
<dbReference type="GO" id="GO:0071885">
    <property type="term" value="F:N-terminal protein N-methyltransferase activity"/>
    <property type="evidence" value="ECO:0000250"/>
    <property type="project" value="UniProtKB"/>
</dbReference>
<dbReference type="GO" id="GO:0008276">
    <property type="term" value="F:protein methyltransferase activity"/>
    <property type="evidence" value="ECO:0000250"/>
    <property type="project" value="UniProtKB"/>
</dbReference>
<dbReference type="GO" id="GO:0007059">
    <property type="term" value="P:chromosome segregation"/>
    <property type="evidence" value="ECO:0000250"/>
    <property type="project" value="UniProtKB"/>
</dbReference>
<dbReference type="GO" id="GO:0018013">
    <property type="term" value="P:N-terminal peptidyl-glycine methylation"/>
    <property type="evidence" value="ECO:0000250"/>
    <property type="project" value="UniProtKB"/>
</dbReference>
<dbReference type="GO" id="GO:0018016">
    <property type="term" value="P:N-terminal peptidyl-proline dimethylation"/>
    <property type="evidence" value="ECO:0000250"/>
    <property type="project" value="UniProtKB"/>
</dbReference>
<dbReference type="GO" id="GO:0035572">
    <property type="term" value="P:N-terminal peptidyl-serine dimethylation"/>
    <property type="evidence" value="ECO:0000250"/>
    <property type="project" value="UniProtKB"/>
</dbReference>
<dbReference type="GO" id="GO:0035573">
    <property type="term" value="P:N-terminal peptidyl-serine trimethylation"/>
    <property type="evidence" value="ECO:0000250"/>
    <property type="project" value="UniProtKB"/>
</dbReference>
<dbReference type="GO" id="GO:0007051">
    <property type="term" value="P:spindle organization"/>
    <property type="evidence" value="ECO:0000250"/>
    <property type="project" value="UniProtKB"/>
</dbReference>
<dbReference type="CDD" id="cd02440">
    <property type="entry name" value="AdoMet_MTases"/>
    <property type="match status" value="1"/>
</dbReference>
<dbReference type="FunFam" id="3.40.50.150:FF:000025">
    <property type="entry name" value="N-terminal Xaa-Pro-Lys N-methyltransferase 1"/>
    <property type="match status" value="1"/>
</dbReference>
<dbReference type="Gene3D" id="3.40.50.150">
    <property type="entry name" value="Vaccinia Virus protein VP39"/>
    <property type="match status" value="1"/>
</dbReference>
<dbReference type="InterPro" id="IPR008576">
    <property type="entry name" value="MeTrfase_NTM1"/>
</dbReference>
<dbReference type="InterPro" id="IPR029063">
    <property type="entry name" value="SAM-dependent_MTases_sf"/>
</dbReference>
<dbReference type="PANTHER" id="PTHR12753">
    <property type="entry name" value="AD-003 - RELATED"/>
    <property type="match status" value="1"/>
</dbReference>
<dbReference type="PANTHER" id="PTHR12753:SF1">
    <property type="entry name" value="N-TERMINAL XAA-PRO-LYS N-METHYLTRANSFERASE 1"/>
    <property type="match status" value="1"/>
</dbReference>
<dbReference type="Pfam" id="PF05891">
    <property type="entry name" value="Methyltransf_PK"/>
    <property type="match status" value="1"/>
</dbReference>
<dbReference type="PIRSF" id="PIRSF016958">
    <property type="entry name" value="DUF858_MeTrfase_lik"/>
    <property type="match status" value="1"/>
</dbReference>
<dbReference type="SUPFAM" id="SSF53335">
    <property type="entry name" value="S-adenosyl-L-methionine-dependent methyltransferases"/>
    <property type="match status" value="1"/>
</dbReference>
<comment type="function">
    <text evidence="1">Distributive alpha-N-methyltransferase that methylates the N-terminus of target proteins containing the N-terminal motif [Ala/Gly/Pro/Ser]-Pro-Lys when the initiator Met is cleaved. Specifically catalyzes mono-, di- or tri-methylation of the exposed alpha-amino group of the Ala, Gly or Ser residue in the [Ala/Gly/Ser]-Pro-Lys motif and mono- or di-methylation of Pro in the Pro-Pro-Lys motif. Required during mitosis for normal bipolar spindle formation and chromosome segregation via its action on target proteins.</text>
</comment>
<comment type="catalytic activity">
    <reaction evidence="1">
        <text>N-terminal L-alanyl-L-prolyl-L-lysyl-[protein] + 3 S-adenosyl-L-methionine = N-terminal N,N,N-trimethyl-L-alanyl-L-prolyl-L-lysyl-[protein] + 3 S-adenosyl-L-homocysteine + 3 H(+)</text>
        <dbReference type="Rhea" id="RHEA:54712"/>
        <dbReference type="Rhea" id="RHEA-COMP:13785"/>
        <dbReference type="Rhea" id="RHEA-COMP:13971"/>
        <dbReference type="ChEBI" id="CHEBI:15378"/>
        <dbReference type="ChEBI" id="CHEBI:57856"/>
        <dbReference type="ChEBI" id="CHEBI:59789"/>
        <dbReference type="ChEBI" id="CHEBI:138057"/>
        <dbReference type="ChEBI" id="CHEBI:138315"/>
        <dbReference type="EC" id="2.1.1.244"/>
    </reaction>
</comment>
<comment type="catalytic activity">
    <reaction evidence="1">
        <text>N-terminal L-seryl-L-prolyl-L-lysyl-[protein] + 3 S-adenosyl-L-methionine = N-terminal N,N,N-trimethyl-L-seryl-L-prolyl-L-lysyl-[protein] + 3 S-adenosyl-L-homocysteine + 3 H(+)</text>
        <dbReference type="Rhea" id="RHEA:54724"/>
        <dbReference type="Rhea" id="RHEA-COMP:13789"/>
        <dbReference type="Rhea" id="RHEA-COMP:13973"/>
        <dbReference type="ChEBI" id="CHEBI:15378"/>
        <dbReference type="ChEBI" id="CHEBI:57856"/>
        <dbReference type="ChEBI" id="CHEBI:59789"/>
        <dbReference type="ChEBI" id="CHEBI:138061"/>
        <dbReference type="ChEBI" id="CHEBI:138317"/>
        <dbReference type="EC" id="2.1.1.244"/>
    </reaction>
</comment>
<comment type="catalytic activity">
    <reaction evidence="1">
        <text>N-terminal L-prolyl-L-prolyl-L-lysyl-[protein] + 2 S-adenosyl-L-methionine = N-terminal N,N-dimethyl-L-prolyl-L-prolyl-L-lysyl-[protein] + 2 S-adenosyl-L-homocysteine + 2 H(+)</text>
        <dbReference type="Rhea" id="RHEA:54736"/>
        <dbReference type="Rhea" id="RHEA-COMP:13787"/>
        <dbReference type="Rhea" id="RHEA-COMP:13974"/>
        <dbReference type="ChEBI" id="CHEBI:15378"/>
        <dbReference type="ChEBI" id="CHEBI:57856"/>
        <dbReference type="ChEBI" id="CHEBI:59789"/>
        <dbReference type="ChEBI" id="CHEBI:138059"/>
        <dbReference type="ChEBI" id="CHEBI:138318"/>
        <dbReference type="EC" id="2.1.1.244"/>
    </reaction>
</comment>
<comment type="subcellular location">
    <subcellularLocation>
        <location evidence="1">Nucleus</location>
    </subcellularLocation>
    <text evidence="1">Predominantly nuclear.</text>
</comment>
<comment type="similarity">
    <text evidence="2">Belongs to the methyltransferase superfamily. NTM1 family.</text>
</comment>
<keyword id="KW-0489">Methyltransferase</keyword>
<keyword id="KW-0539">Nucleus</keyword>
<keyword id="KW-1185">Reference proteome</keyword>
<keyword id="KW-0949">S-adenosyl-L-methionine</keyword>
<keyword id="KW-0808">Transferase</keyword>
<sequence>MSTELVEDEAQFYCKAQKYWKNVPATVDGMLGGYGHISNIDLNGSKKFLQRFLRQEGSNKTGNMYALDCGAGIGRITKRLLLPLFKKVDMVDVTDEFLSKAKSYLGEEGSRVGNYFCCGLQEFSPEPNRYDVIWIQWVIGHLTDEHLVDFLKRCSLGLRPNGIIVIKDNVTQDVSIMDDVDSSICRDIDLVRKLIKQAGLSLLAVERQENFPDEIYHVFSFAMR</sequence>
<proteinExistence type="evidence at transcript level"/>